<organism>
    <name type="scientific">Campylobacter curvus (strain 525.92)</name>
    <dbReference type="NCBI Taxonomy" id="360105"/>
    <lineage>
        <taxon>Bacteria</taxon>
        <taxon>Pseudomonadati</taxon>
        <taxon>Campylobacterota</taxon>
        <taxon>Epsilonproteobacteria</taxon>
        <taxon>Campylobacterales</taxon>
        <taxon>Campylobacteraceae</taxon>
        <taxon>Campylobacter</taxon>
    </lineage>
</organism>
<proteinExistence type="inferred from homology"/>
<gene>
    <name evidence="1" type="primary">miaA</name>
    <name type="ordered locus">Ccur92_01870</name>
    <name type="ORF">CCV52592_0816</name>
</gene>
<reference key="1">
    <citation type="submission" date="2007-07" db="EMBL/GenBank/DDBJ databases">
        <title>Genome sequence of Campylobacter curvus 525.92 isolated from human feces.</title>
        <authorList>
            <person name="Fouts D.E."/>
            <person name="Mongodin E.F."/>
            <person name="Puiu D."/>
            <person name="Sebastian Y."/>
            <person name="Miller W.G."/>
            <person name="Mandrell R.E."/>
            <person name="Lastovica A.J."/>
            <person name="Nelson K.E."/>
        </authorList>
    </citation>
    <scope>NUCLEOTIDE SEQUENCE [LARGE SCALE GENOMIC DNA]</scope>
    <source>
        <strain>525.92</strain>
    </source>
</reference>
<evidence type="ECO:0000255" key="1">
    <source>
        <dbReference type="HAMAP-Rule" id="MF_00185"/>
    </source>
</evidence>
<keyword id="KW-0067">ATP-binding</keyword>
<keyword id="KW-0460">Magnesium</keyword>
<keyword id="KW-0547">Nucleotide-binding</keyword>
<keyword id="KW-1185">Reference proteome</keyword>
<keyword id="KW-0808">Transferase</keyword>
<keyword id="KW-0819">tRNA processing</keyword>
<accession>A7GW99</accession>
<sequence length="296" mass="33425">MFCEFAIIGTTASGKSALALQIAQEFSGVILSLDSLALYKQIDIASAKPSRKELASVKHFGVDEIYPNENFSVGMFFKIYERAKDYALNADCPLIITGGSGFYLRSMLSGLAPDVPKCDKALSNDEIYALAARIDPEFCAKFSPNDSYRLEKWYQIYKFSGAVPSTWLRENTSEPVIKELAIFEILWSAQAIRERIQRRTQAMFEAGLLEEAKFLFDTYGRELKPLRSIGLKECADFFDAKISREELASLICTHTAQLAKRQRTFNRSQFSKIFIGEPDAAREKIKGFLKNQAKRP</sequence>
<name>MIAA_CAMC5</name>
<feature type="chain" id="PRO_0000377102" description="tRNA dimethylallyltransferase">
    <location>
        <begin position="1"/>
        <end position="296"/>
    </location>
</feature>
<feature type="region of interest" description="Interaction with substrate tRNA" evidence="1">
    <location>
        <begin position="34"/>
        <end position="37"/>
    </location>
</feature>
<feature type="binding site" evidence="1">
    <location>
        <begin position="9"/>
        <end position="16"/>
    </location>
    <ligand>
        <name>ATP</name>
        <dbReference type="ChEBI" id="CHEBI:30616"/>
    </ligand>
</feature>
<feature type="binding site" evidence="1">
    <location>
        <begin position="11"/>
        <end position="16"/>
    </location>
    <ligand>
        <name>substrate</name>
    </ligand>
</feature>
<feature type="site" description="Interaction with substrate tRNA" evidence="1">
    <location>
        <position position="100"/>
    </location>
</feature>
<protein>
    <recommendedName>
        <fullName evidence="1">tRNA dimethylallyltransferase</fullName>
        <ecNumber evidence="1">2.5.1.75</ecNumber>
    </recommendedName>
    <alternativeName>
        <fullName evidence="1">Dimethylallyl diphosphate:tRNA dimethylallyltransferase</fullName>
        <shortName evidence="1">DMAPP:tRNA dimethylallyltransferase</shortName>
        <shortName evidence="1">DMATase</shortName>
    </alternativeName>
    <alternativeName>
        <fullName evidence="1">Isopentenyl-diphosphate:tRNA isopentenyltransferase</fullName>
        <shortName evidence="1">IPP transferase</shortName>
        <shortName evidence="1">IPPT</shortName>
        <shortName evidence="1">IPTase</shortName>
    </alternativeName>
</protein>
<dbReference type="EC" id="2.5.1.75" evidence="1"/>
<dbReference type="EMBL" id="CP000767">
    <property type="protein sequence ID" value="EAU01113.1"/>
    <property type="molecule type" value="Genomic_DNA"/>
</dbReference>
<dbReference type="RefSeq" id="WP_011991750.1">
    <property type="nucleotide sequence ID" value="NC_009715.2"/>
</dbReference>
<dbReference type="SMR" id="A7GW99"/>
<dbReference type="STRING" id="360105.CCV52592_0816"/>
<dbReference type="KEGG" id="ccv:CCV52592_0816"/>
<dbReference type="HOGENOM" id="CLU_032616_0_1_7"/>
<dbReference type="OrthoDB" id="9776390at2"/>
<dbReference type="Proteomes" id="UP000006380">
    <property type="component" value="Chromosome"/>
</dbReference>
<dbReference type="GO" id="GO:0005524">
    <property type="term" value="F:ATP binding"/>
    <property type="evidence" value="ECO:0007669"/>
    <property type="project" value="UniProtKB-UniRule"/>
</dbReference>
<dbReference type="GO" id="GO:0052381">
    <property type="term" value="F:tRNA dimethylallyltransferase activity"/>
    <property type="evidence" value="ECO:0007669"/>
    <property type="project" value="UniProtKB-UniRule"/>
</dbReference>
<dbReference type="GO" id="GO:0006400">
    <property type="term" value="P:tRNA modification"/>
    <property type="evidence" value="ECO:0007669"/>
    <property type="project" value="TreeGrafter"/>
</dbReference>
<dbReference type="Gene3D" id="1.10.20.140">
    <property type="match status" value="1"/>
</dbReference>
<dbReference type="Gene3D" id="3.40.50.300">
    <property type="entry name" value="P-loop containing nucleotide triphosphate hydrolases"/>
    <property type="match status" value="1"/>
</dbReference>
<dbReference type="HAMAP" id="MF_00185">
    <property type="entry name" value="IPP_trans"/>
    <property type="match status" value="1"/>
</dbReference>
<dbReference type="InterPro" id="IPR039657">
    <property type="entry name" value="Dimethylallyltransferase"/>
</dbReference>
<dbReference type="InterPro" id="IPR018022">
    <property type="entry name" value="IPT"/>
</dbReference>
<dbReference type="InterPro" id="IPR027417">
    <property type="entry name" value="P-loop_NTPase"/>
</dbReference>
<dbReference type="NCBIfam" id="TIGR00174">
    <property type="entry name" value="miaA"/>
    <property type="match status" value="1"/>
</dbReference>
<dbReference type="PANTHER" id="PTHR11088">
    <property type="entry name" value="TRNA DIMETHYLALLYLTRANSFERASE"/>
    <property type="match status" value="1"/>
</dbReference>
<dbReference type="PANTHER" id="PTHR11088:SF60">
    <property type="entry name" value="TRNA DIMETHYLALLYLTRANSFERASE"/>
    <property type="match status" value="1"/>
</dbReference>
<dbReference type="Pfam" id="PF01715">
    <property type="entry name" value="IPPT"/>
    <property type="match status" value="1"/>
</dbReference>
<dbReference type="SUPFAM" id="SSF52540">
    <property type="entry name" value="P-loop containing nucleoside triphosphate hydrolases"/>
    <property type="match status" value="1"/>
</dbReference>
<comment type="function">
    <text evidence="1">Catalyzes the transfer of a dimethylallyl group onto the adenine at position 37 in tRNAs that read codons beginning with uridine, leading to the formation of N6-(dimethylallyl)adenosine (i(6)A).</text>
</comment>
<comment type="catalytic activity">
    <reaction evidence="1">
        <text>adenosine(37) in tRNA + dimethylallyl diphosphate = N(6)-dimethylallyladenosine(37) in tRNA + diphosphate</text>
        <dbReference type="Rhea" id="RHEA:26482"/>
        <dbReference type="Rhea" id="RHEA-COMP:10162"/>
        <dbReference type="Rhea" id="RHEA-COMP:10375"/>
        <dbReference type="ChEBI" id="CHEBI:33019"/>
        <dbReference type="ChEBI" id="CHEBI:57623"/>
        <dbReference type="ChEBI" id="CHEBI:74411"/>
        <dbReference type="ChEBI" id="CHEBI:74415"/>
        <dbReference type="EC" id="2.5.1.75"/>
    </reaction>
</comment>
<comment type="cofactor">
    <cofactor evidence="1">
        <name>Mg(2+)</name>
        <dbReference type="ChEBI" id="CHEBI:18420"/>
    </cofactor>
</comment>
<comment type="subunit">
    <text evidence="1">Monomer.</text>
</comment>
<comment type="similarity">
    <text evidence="1">Belongs to the IPP transferase family.</text>
</comment>